<accession>Q7VM26</accession>
<proteinExistence type="inferred from homology"/>
<reference key="1">
    <citation type="submission" date="2003-06" db="EMBL/GenBank/DDBJ databases">
        <title>The complete genome sequence of Haemophilus ducreyi.</title>
        <authorList>
            <person name="Munson R.S. Jr."/>
            <person name="Ray W.C."/>
            <person name="Mahairas G."/>
            <person name="Sabo P."/>
            <person name="Mungur R."/>
            <person name="Johnson L."/>
            <person name="Nguyen D."/>
            <person name="Wang J."/>
            <person name="Forst C."/>
            <person name="Hood L."/>
        </authorList>
    </citation>
    <scope>NUCLEOTIDE SEQUENCE [LARGE SCALE GENOMIC DNA]</scope>
    <source>
        <strain>35000HP / ATCC 700724</strain>
    </source>
</reference>
<dbReference type="EC" id="2.3.1.129" evidence="1"/>
<dbReference type="EMBL" id="AE017143">
    <property type="protein sequence ID" value="AAP96037.1"/>
    <property type="molecule type" value="Genomic_DNA"/>
</dbReference>
<dbReference type="RefSeq" id="WP_010945086.1">
    <property type="nucleotide sequence ID" value="NC_002940.2"/>
</dbReference>
<dbReference type="SMR" id="Q7VM26"/>
<dbReference type="STRING" id="233412.HD_1187"/>
<dbReference type="KEGG" id="hdu:HD_1187"/>
<dbReference type="eggNOG" id="COG1043">
    <property type="taxonomic scope" value="Bacteria"/>
</dbReference>
<dbReference type="HOGENOM" id="CLU_061249_0_0_6"/>
<dbReference type="OrthoDB" id="9807278at2"/>
<dbReference type="UniPathway" id="UPA00359">
    <property type="reaction ID" value="UER00477"/>
</dbReference>
<dbReference type="Proteomes" id="UP000001022">
    <property type="component" value="Chromosome"/>
</dbReference>
<dbReference type="GO" id="GO:0005737">
    <property type="term" value="C:cytoplasm"/>
    <property type="evidence" value="ECO:0007669"/>
    <property type="project" value="UniProtKB-SubCell"/>
</dbReference>
<dbReference type="GO" id="GO:0016020">
    <property type="term" value="C:membrane"/>
    <property type="evidence" value="ECO:0007669"/>
    <property type="project" value="GOC"/>
</dbReference>
<dbReference type="GO" id="GO:0008780">
    <property type="term" value="F:acyl-[acyl-carrier-protein]-UDP-N-acetylglucosamine O-acyltransferase activity"/>
    <property type="evidence" value="ECO:0007669"/>
    <property type="project" value="UniProtKB-UniRule"/>
</dbReference>
<dbReference type="GO" id="GO:0009245">
    <property type="term" value="P:lipid A biosynthetic process"/>
    <property type="evidence" value="ECO:0007669"/>
    <property type="project" value="UniProtKB-UniRule"/>
</dbReference>
<dbReference type="CDD" id="cd03351">
    <property type="entry name" value="LbH_UDP-GlcNAc_AT"/>
    <property type="match status" value="1"/>
</dbReference>
<dbReference type="FunFam" id="2.160.10.10:FF:000003">
    <property type="entry name" value="Acyl-[acyl-carrier-protein]--UDP-N-acetylglucosamine O-acyltransferase"/>
    <property type="match status" value="1"/>
</dbReference>
<dbReference type="Gene3D" id="2.160.10.10">
    <property type="entry name" value="Hexapeptide repeat proteins"/>
    <property type="match status" value="1"/>
</dbReference>
<dbReference type="Gene3D" id="1.20.1180.10">
    <property type="entry name" value="Udp N-acetylglucosamine O-acyltransferase, C-terminal domain"/>
    <property type="match status" value="1"/>
</dbReference>
<dbReference type="HAMAP" id="MF_00387">
    <property type="entry name" value="LpxA"/>
    <property type="match status" value="1"/>
</dbReference>
<dbReference type="InterPro" id="IPR029098">
    <property type="entry name" value="Acetyltransf_C"/>
</dbReference>
<dbReference type="InterPro" id="IPR037157">
    <property type="entry name" value="Acetyltransf_C_sf"/>
</dbReference>
<dbReference type="InterPro" id="IPR001451">
    <property type="entry name" value="Hexapep"/>
</dbReference>
<dbReference type="InterPro" id="IPR018357">
    <property type="entry name" value="Hexapep_transf_CS"/>
</dbReference>
<dbReference type="InterPro" id="IPR010137">
    <property type="entry name" value="Lipid_A_LpxA"/>
</dbReference>
<dbReference type="InterPro" id="IPR011004">
    <property type="entry name" value="Trimer_LpxA-like_sf"/>
</dbReference>
<dbReference type="NCBIfam" id="TIGR01852">
    <property type="entry name" value="lipid_A_lpxA"/>
    <property type="match status" value="1"/>
</dbReference>
<dbReference type="NCBIfam" id="NF003657">
    <property type="entry name" value="PRK05289.1"/>
    <property type="match status" value="1"/>
</dbReference>
<dbReference type="PANTHER" id="PTHR43480">
    <property type="entry name" value="ACYL-[ACYL-CARRIER-PROTEIN]--UDP-N-ACETYLGLUCOSAMINE O-ACYLTRANSFERASE"/>
    <property type="match status" value="1"/>
</dbReference>
<dbReference type="PANTHER" id="PTHR43480:SF1">
    <property type="entry name" value="ACYL-[ACYL-CARRIER-PROTEIN]--UDP-N-ACETYLGLUCOSAMINE O-ACYLTRANSFERASE, MITOCHONDRIAL-RELATED"/>
    <property type="match status" value="1"/>
</dbReference>
<dbReference type="Pfam" id="PF13720">
    <property type="entry name" value="Acetyltransf_11"/>
    <property type="match status" value="1"/>
</dbReference>
<dbReference type="Pfam" id="PF00132">
    <property type="entry name" value="Hexapep"/>
    <property type="match status" value="1"/>
</dbReference>
<dbReference type="PIRSF" id="PIRSF000456">
    <property type="entry name" value="UDP-GlcNAc_acltr"/>
    <property type="match status" value="1"/>
</dbReference>
<dbReference type="SUPFAM" id="SSF51161">
    <property type="entry name" value="Trimeric LpxA-like enzymes"/>
    <property type="match status" value="1"/>
</dbReference>
<dbReference type="PROSITE" id="PS00101">
    <property type="entry name" value="HEXAPEP_TRANSFERASES"/>
    <property type="match status" value="2"/>
</dbReference>
<evidence type="ECO:0000255" key="1">
    <source>
        <dbReference type="HAMAP-Rule" id="MF_00387"/>
    </source>
</evidence>
<protein>
    <recommendedName>
        <fullName evidence="1">Acyl-[acyl-carrier-protein]--UDP-N-acetylglucosamine O-acyltransferase</fullName>
        <shortName evidence="1">UDP-N-acetylglucosamine acyltransferase</shortName>
        <ecNumber evidence="1">2.3.1.129</ecNumber>
    </recommendedName>
</protein>
<keyword id="KW-0012">Acyltransferase</keyword>
<keyword id="KW-0963">Cytoplasm</keyword>
<keyword id="KW-0441">Lipid A biosynthesis</keyword>
<keyword id="KW-0444">Lipid biosynthesis</keyword>
<keyword id="KW-0443">Lipid metabolism</keyword>
<keyword id="KW-1185">Reference proteome</keyword>
<keyword id="KW-0677">Repeat</keyword>
<keyword id="KW-0808">Transferase</keyword>
<gene>
    <name evidence="1" type="primary">lpxA</name>
    <name type="ordered locus">HD_1187</name>
</gene>
<comment type="function">
    <text evidence="1">Involved in the biosynthesis of lipid A, a phosphorylated glycolipid that anchors the lipopolysaccharide to the outer membrane of the cell.</text>
</comment>
<comment type="catalytic activity">
    <reaction evidence="1">
        <text>a (3R)-hydroxyacyl-[ACP] + UDP-N-acetyl-alpha-D-glucosamine = a UDP-3-O-[(3R)-3-hydroxyacyl]-N-acetyl-alpha-D-glucosamine + holo-[ACP]</text>
        <dbReference type="Rhea" id="RHEA:67812"/>
        <dbReference type="Rhea" id="RHEA-COMP:9685"/>
        <dbReference type="Rhea" id="RHEA-COMP:9945"/>
        <dbReference type="ChEBI" id="CHEBI:57705"/>
        <dbReference type="ChEBI" id="CHEBI:64479"/>
        <dbReference type="ChEBI" id="CHEBI:78827"/>
        <dbReference type="ChEBI" id="CHEBI:173225"/>
        <dbReference type="EC" id="2.3.1.129"/>
    </reaction>
</comment>
<comment type="pathway">
    <text evidence="1">Glycolipid biosynthesis; lipid IV(A) biosynthesis; lipid IV(A) from (3R)-3-hydroxytetradecanoyl-[acyl-carrier-protein] and UDP-N-acetyl-alpha-D-glucosamine: step 1/6.</text>
</comment>
<comment type="subunit">
    <text evidence="1">Homotrimer.</text>
</comment>
<comment type="subcellular location">
    <subcellularLocation>
        <location evidence="1">Cytoplasm</location>
    </subcellularLocation>
</comment>
<comment type="similarity">
    <text evidence="1">Belongs to the transferase hexapeptide repeat family. LpxA subfamily.</text>
</comment>
<sequence>MRLIDSTAKISPLAVIEDGAQIGAHVEIGPFCVIGKNVKIDAKTILHSHVVINGHTEIGEQNQIFQFASIGEINQDLKYQGEPTKVVIGDRNSIRESVTIHRGTVQGGGVTRIGNDNLFMINAHIAHDCNISNHCIIANNGTLAGHVRLDDFVIVGGMSAIHQFVIIGSHVMLGGGSMVSQDVPPYVMAQGNHAQPFGVNLEGLKRRGFDKPTMHAIRHVYKLIYRSGKTIEEVLPEIEHIALNEPAIKVYLDFFKHSTRGIIR</sequence>
<organism>
    <name type="scientific">Haemophilus ducreyi (strain 35000HP / ATCC 700724)</name>
    <dbReference type="NCBI Taxonomy" id="233412"/>
    <lineage>
        <taxon>Bacteria</taxon>
        <taxon>Pseudomonadati</taxon>
        <taxon>Pseudomonadota</taxon>
        <taxon>Gammaproteobacteria</taxon>
        <taxon>Pasteurellales</taxon>
        <taxon>Pasteurellaceae</taxon>
        <taxon>Haemophilus</taxon>
    </lineage>
</organism>
<feature type="chain" id="PRO_0000188050" description="Acyl-[acyl-carrier-protein]--UDP-N-acetylglucosamine O-acyltransferase">
    <location>
        <begin position="1"/>
        <end position="264"/>
    </location>
</feature>
<name>LPXA_HAEDU</name>